<keyword id="KW-0067">ATP-binding</keyword>
<keyword id="KW-0173">Coenzyme A biosynthesis</keyword>
<keyword id="KW-0963">Cytoplasm</keyword>
<keyword id="KW-0418">Kinase</keyword>
<keyword id="KW-0547">Nucleotide-binding</keyword>
<keyword id="KW-0808">Transferase</keyword>
<accession>B6J2J7</accession>
<protein>
    <recommendedName>
        <fullName evidence="1">Pantothenate kinase</fullName>
        <ecNumber evidence="1">2.7.1.33</ecNumber>
    </recommendedName>
    <alternativeName>
        <fullName evidence="1">Pantothenic acid kinase</fullName>
    </alternativeName>
</protein>
<evidence type="ECO:0000255" key="1">
    <source>
        <dbReference type="HAMAP-Rule" id="MF_00215"/>
    </source>
</evidence>
<proteinExistence type="inferred from homology"/>
<sequence>MTVKPELNEITPYLQFNRQEWGNFRKDTPLTLTESDLDKLQGQIEIVSLKEVTEIYLPLSRLLSFYVTARQTLQQATYQFLGKPEPKVPYIIGIAGSVAVGKSTTSRVLKALLSRWPDHPNVEVITTDGFLYSNAKLEKQGLMKRKGFPESYDMPSLLRVLNAIKSGQRNVRIPVYSHHYYDIVRGQYEIVDQPDIVILEGLNILQTGVRKTLQQLQVFVSDFFDFSLFVDAQAQVIQKWYIDRVLSFWRTTFKDPHSYFHYLTQMSETEVAAFAKHVWNEINKVNLMENILPYKNRAQLILEKAADHSIQKVYLRKI</sequence>
<dbReference type="EC" id="2.7.1.33" evidence="1"/>
<dbReference type="EMBL" id="CP001019">
    <property type="protein sequence ID" value="ACJ19074.1"/>
    <property type="molecule type" value="Genomic_DNA"/>
</dbReference>
<dbReference type="RefSeq" id="WP_005771577.1">
    <property type="nucleotide sequence ID" value="NC_011527.1"/>
</dbReference>
<dbReference type="SMR" id="B6J2J7"/>
<dbReference type="KEGG" id="cbg:CbuG_1807"/>
<dbReference type="HOGENOM" id="CLU_053818_1_1_6"/>
<dbReference type="UniPathway" id="UPA00241">
    <property type="reaction ID" value="UER00352"/>
</dbReference>
<dbReference type="GO" id="GO:0005737">
    <property type="term" value="C:cytoplasm"/>
    <property type="evidence" value="ECO:0007669"/>
    <property type="project" value="UniProtKB-SubCell"/>
</dbReference>
<dbReference type="GO" id="GO:0005524">
    <property type="term" value="F:ATP binding"/>
    <property type="evidence" value="ECO:0007669"/>
    <property type="project" value="UniProtKB-UniRule"/>
</dbReference>
<dbReference type="GO" id="GO:0004594">
    <property type="term" value="F:pantothenate kinase activity"/>
    <property type="evidence" value="ECO:0007669"/>
    <property type="project" value="UniProtKB-UniRule"/>
</dbReference>
<dbReference type="GO" id="GO:0015937">
    <property type="term" value="P:coenzyme A biosynthetic process"/>
    <property type="evidence" value="ECO:0007669"/>
    <property type="project" value="UniProtKB-UniRule"/>
</dbReference>
<dbReference type="CDD" id="cd02025">
    <property type="entry name" value="PanK"/>
    <property type="match status" value="1"/>
</dbReference>
<dbReference type="FunFam" id="3.40.50.300:FF:000242">
    <property type="entry name" value="Pantothenate kinase"/>
    <property type="match status" value="1"/>
</dbReference>
<dbReference type="Gene3D" id="3.40.50.300">
    <property type="entry name" value="P-loop containing nucleotide triphosphate hydrolases"/>
    <property type="match status" value="1"/>
</dbReference>
<dbReference type="HAMAP" id="MF_00215">
    <property type="entry name" value="Pantothen_kinase_1"/>
    <property type="match status" value="1"/>
</dbReference>
<dbReference type="InterPro" id="IPR027417">
    <property type="entry name" value="P-loop_NTPase"/>
</dbReference>
<dbReference type="InterPro" id="IPR004566">
    <property type="entry name" value="PanK"/>
</dbReference>
<dbReference type="InterPro" id="IPR006083">
    <property type="entry name" value="PRK/URK"/>
</dbReference>
<dbReference type="NCBIfam" id="TIGR00554">
    <property type="entry name" value="panK_bact"/>
    <property type="match status" value="1"/>
</dbReference>
<dbReference type="PANTHER" id="PTHR10285">
    <property type="entry name" value="URIDINE KINASE"/>
    <property type="match status" value="1"/>
</dbReference>
<dbReference type="Pfam" id="PF00485">
    <property type="entry name" value="PRK"/>
    <property type="match status" value="1"/>
</dbReference>
<dbReference type="PIRSF" id="PIRSF000545">
    <property type="entry name" value="Pantothenate_kin"/>
    <property type="match status" value="1"/>
</dbReference>
<dbReference type="SUPFAM" id="SSF52540">
    <property type="entry name" value="P-loop containing nucleoside triphosphate hydrolases"/>
    <property type="match status" value="1"/>
</dbReference>
<name>COAA_COXB2</name>
<organism>
    <name type="scientific">Coxiella burnetii (strain CbuG_Q212)</name>
    <name type="common">Coxiella burnetii (strain Q212)</name>
    <dbReference type="NCBI Taxonomy" id="434923"/>
    <lineage>
        <taxon>Bacteria</taxon>
        <taxon>Pseudomonadati</taxon>
        <taxon>Pseudomonadota</taxon>
        <taxon>Gammaproteobacteria</taxon>
        <taxon>Legionellales</taxon>
        <taxon>Coxiellaceae</taxon>
        <taxon>Coxiella</taxon>
    </lineage>
</organism>
<feature type="chain" id="PRO_1000099930" description="Pantothenate kinase">
    <location>
        <begin position="1"/>
        <end position="318"/>
    </location>
</feature>
<feature type="binding site" evidence="1">
    <location>
        <begin position="96"/>
        <end position="103"/>
    </location>
    <ligand>
        <name>ATP</name>
        <dbReference type="ChEBI" id="CHEBI:30616"/>
    </ligand>
</feature>
<comment type="catalytic activity">
    <reaction evidence="1">
        <text>(R)-pantothenate + ATP = (R)-4'-phosphopantothenate + ADP + H(+)</text>
        <dbReference type="Rhea" id="RHEA:16373"/>
        <dbReference type="ChEBI" id="CHEBI:10986"/>
        <dbReference type="ChEBI" id="CHEBI:15378"/>
        <dbReference type="ChEBI" id="CHEBI:29032"/>
        <dbReference type="ChEBI" id="CHEBI:30616"/>
        <dbReference type="ChEBI" id="CHEBI:456216"/>
        <dbReference type="EC" id="2.7.1.33"/>
    </reaction>
</comment>
<comment type="pathway">
    <text evidence="1">Cofactor biosynthesis; coenzyme A biosynthesis; CoA from (R)-pantothenate: step 1/5.</text>
</comment>
<comment type="subcellular location">
    <subcellularLocation>
        <location evidence="1">Cytoplasm</location>
    </subcellularLocation>
</comment>
<comment type="similarity">
    <text evidence="1">Belongs to the prokaryotic pantothenate kinase family.</text>
</comment>
<gene>
    <name evidence="1" type="primary">coaA</name>
    <name type="ordered locus">CbuG_1807</name>
</gene>
<reference key="1">
    <citation type="journal article" date="2009" name="Infect. Immun.">
        <title>Comparative genomics reveal extensive transposon-mediated genomic plasticity and diversity among potential effector proteins within the genus Coxiella.</title>
        <authorList>
            <person name="Beare P.A."/>
            <person name="Unsworth N."/>
            <person name="Andoh M."/>
            <person name="Voth D.E."/>
            <person name="Omsland A."/>
            <person name="Gilk S.D."/>
            <person name="Williams K.P."/>
            <person name="Sobral B.W."/>
            <person name="Kupko J.J. III"/>
            <person name="Porcella S.F."/>
            <person name="Samuel J.E."/>
            <person name="Heinzen R.A."/>
        </authorList>
    </citation>
    <scope>NUCLEOTIDE SEQUENCE [LARGE SCALE GENOMIC DNA]</scope>
    <source>
        <strain>CbuG_Q212</strain>
    </source>
</reference>